<feature type="peptide" id="PRO_0000439373" description="Conantokin-Gm">
    <location>
        <begin position="1"/>
        <end position="18"/>
    </location>
</feature>
<feature type="modified residue" description="4-carboxyglutamate" evidence="2">
    <location>
        <position position="4"/>
    </location>
</feature>
<feature type="modified residue" description="4-carboxyglutamate" evidence="2">
    <location>
        <position position="9"/>
    </location>
</feature>
<feature type="modified residue" description="4-carboxyglutamate" evidence="2">
    <location>
        <position position="13"/>
    </location>
</feature>
<proteinExistence type="evidence at protein level"/>
<reference key="1">
    <citation type="journal article" date="2006" name="Prog. Mol. Subcell. Biol.">
        <title>Hyperhydroxylation: a new strategy for neuronal targeting by venomous marine molluscs.</title>
        <authorList>
            <person name="Franco A."/>
            <person name="Pisarewicz K."/>
            <person name="Moller C."/>
            <person name="Mora D."/>
            <person name="Fields G.B."/>
            <person name="Mari F."/>
        </authorList>
    </citation>
    <scope>REVIEW</scope>
    <scope>GAMMA-CARBOXYGLUTAMATION AT GLU-4; GLU-9 AND GLU-13</scope>
</reference>
<dbReference type="GO" id="GO:0005576">
    <property type="term" value="C:extracellular region"/>
    <property type="evidence" value="ECO:0007669"/>
    <property type="project" value="UniProtKB-SubCell"/>
</dbReference>
<dbReference type="GO" id="GO:0035792">
    <property type="term" value="C:host cell postsynaptic membrane"/>
    <property type="evidence" value="ECO:0007669"/>
    <property type="project" value="UniProtKB-KW"/>
</dbReference>
<dbReference type="GO" id="GO:0099106">
    <property type="term" value="F:ion channel regulator activity"/>
    <property type="evidence" value="ECO:0007669"/>
    <property type="project" value="UniProtKB-KW"/>
</dbReference>
<dbReference type="GO" id="GO:0090729">
    <property type="term" value="F:toxin activity"/>
    <property type="evidence" value="ECO:0007669"/>
    <property type="project" value="UniProtKB-KW"/>
</dbReference>
<organism>
    <name type="scientific">Conus gloriamaris</name>
    <name type="common">Glory-of-the-Sea cone</name>
    <dbReference type="NCBI Taxonomy" id="37336"/>
    <lineage>
        <taxon>Eukaryota</taxon>
        <taxon>Metazoa</taxon>
        <taxon>Spiralia</taxon>
        <taxon>Lophotrochozoa</taxon>
        <taxon>Mollusca</taxon>
        <taxon>Gastropoda</taxon>
        <taxon>Caenogastropoda</taxon>
        <taxon>Neogastropoda</taxon>
        <taxon>Conoidea</taxon>
        <taxon>Conidae</taxon>
        <taxon>Conus</taxon>
        <taxon>Cylinder</taxon>
    </lineage>
</organism>
<sequence>GAKERNNAEAVRERLEEI</sequence>
<accession>P0DOZ6</accession>
<name>CKG_CONGL</name>
<evidence type="ECO:0000250" key="1"/>
<evidence type="ECO:0000303" key="2">
    <source>
    </source>
</evidence>
<evidence type="ECO:0000305" key="3"/>
<comment type="function">
    <text evidence="1">Conantokins inhibit N-methyl-D-aspartate (NMDA) receptors.</text>
</comment>
<comment type="subcellular location">
    <subcellularLocation>
        <location evidence="1">Secreted</location>
    </subcellularLocation>
</comment>
<comment type="tissue specificity">
    <text evidence="3">Expressed by the venom duct.</text>
</comment>
<comment type="miscellaneous">
    <text evidence="3">The mature peptide does not contain cysteine residue.</text>
</comment>
<keyword id="KW-0301">Gamma-carboxyglutamic acid</keyword>
<keyword id="KW-0872">Ion channel impairing toxin</keyword>
<keyword id="KW-1028">Ionotropic glutamate receptor inhibitor</keyword>
<keyword id="KW-0528">Neurotoxin</keyword>
<keyword id="KW-0629">Postsynaptic neurotoxin</keyword>
<keyword id="KW-0964">Secreted</keyword>
<keyword id="KW-0800">Toxin</keyword>
<protein>
    <recommendedName>
        <fullName evidence="2">Conantokin-Gm</fullName>
        <shortName evidence="2">Con-Gm</shortName>
    </recommendedName>
</protein>